<gene>
    <name type="primary">nar-1</name>
    <name type="ORF">NCU03204</name>
</gene>
<protein>
    <recommendedName>
        <fullName>Cytosolic Fe-S cluster assembly factor nar-1</fullName>
    </recommendedName>
    <alternativeName>
        <fullName>Nuclear architecture-related protein 1</fullName>
    </alternativeName>
</protein>
<sequence length="581" mass="62288">MSAILSVDDLNDFISPGVACIKPIETLPTAAPPAGDANSSLEVEVILDGQQPEAKSNAPPAEISLTDCLACSGCVTSAEAVLVSLQSHNEVLNMLDSAPALKLVGPDANGKHSVQGLENSDAKLYVASVSPQSRASLAAACGNGVTEQQAGRMIEQLFLGEQGLARGGKWGNKFTWVVDTNTAREATLVLGSDEVLGGLIAPSDKAATPVLTASCPGWVCYAEKTHPYVLPHLSRVKSPQALMGTLLKTSLSRILDIAPERIWHLAVMPCFDKKLEASREELTDAVWAGDGKPGRGVRDVDCVITSKEVLMLAASRGFDFFSLSASMPPQTPRFPDQLIHDFLFRPGHRQQSREAGTSGGNMHFILRHLQAKNPGSQIQTVPGRNADVVEYKLIAEAGEVMFKAARYYGFRNIQNLVRKLKPAKTSRMPGGKPFGSAKRPAGKASGLDYGYVEVMACPGGCTNGGGQIKVDDQVVVDRKGLAVKPGPQEQKEWQKEVDEAYFSGDESGSRAQDESLDLVVDGISPSHIRNVLTHWSTLTGIQLERLAYTSYREVVSDVGKEKKMTDTERVVQLAGKIGGGW</sequence>
<evidence type="ECO:0000250" key="1"/>
<evidence type="ECO:0000255" key="2"/>
<evidence type="ECO:0000305" key="3"/>
<feature type="chain" id="PRO_0000383732" description="Cytosolic Fe-S cluster assembly factor nar-1">
    <location>
        <begin position="1"/>
        <end position="581"/>
    </location>
</feature>
<feature type="binding site" evidence="2">
    <location>
        <position position="20"/>
    </location>
    <ligand>
        <name>[4Fe-4S] cluster</name>
        <dbReference type="ChEBI" id="CHEBI:49883"/>
        <label>1</label>
    </ligand>
</feature>
<feature type="binding site" evidence="2">
    <location>
        <position position="68"/>
    </location>
    <ligand>
        <name>[4Fe-4S] cluster</name>
        <dbReference type="ChEBI" id="CHEBI:49883"/>
        <label>1</label>
    </ligand>
</feature>
<feature type="binding site" evidence="2">
    <location>
        <position position="71"/>
    </location>
    <ligand>
        <name>[4Fe-4S] cluster</name>
        <dbReference type="ChEBI" id="CHEBI:49883"/>
        <label>1</label>
    </ligand>
</feature>
<feature type="binding site" evidence="2">
    <location>
        <position position="74"/>
    </location>
    <ligand>
        <name>[4Fe-4S] cluster</name>
        <dbReference type="ChEBI" id="CHEBI:49883"/>
        <label>1</label>
    </ligand>
</feature>
<feature type="binding site" evidence="2">
    <location>
        <position position="215"/>
    </location>
    <ligand>
        <name>[4Fe-4S] cluster</name>
        <dbReference type="ChEBI" id="CHEBI:49883"/>
        <label>2</label>
    </ligand>
</feature>
<feature type="binding site" evidence="2">
    <location>
        <position position="270"/>
    </location>
    <ligand>
        <name>[4Fe-4S] cluster</name>
        <dbReference type="ChEBI" id="CHEBI:49883"/>
        <label>2</label>
    </ligand>
</feature>
<feature type="binding site" evidence="2">
    <location>
        <position position="457"/>
    </location>
    <ligand>
        <name>[4Fe-4S] cluster</name>
        <dbReference type="ChEBI" id="CHEBI:49883"/>
        <label>2</label>
    </ligand>
</feature>
<feature type="binding site" evidence="2">
    <location>
        <position position="461"/>
    </location>
    <ligand>
        <name>[4Fe-4S] cluster</name>
        <dbReference type="ChEBI" id="CHEBI:49883"/>
        <label>2</label>
    </ligand>
</feature>
<proteinExistence type="inferred from homology"/>
<keyword id="KW-0004">4Fe-4S</keyword>
<keyword id="KW-0408">Iron</keyword>
<keyword id="KW-0411">Iron-sulfur</keyword>
<keyword id="KW-0479">Metal-binding</keyword>
<keyword id="KW-1185">Reference proteome</keyword>
<name>NAR1_NEUCR</name>
<accession>Q7SGW5</accession>
<reference key="1">
    <citation type="journal article" date="2003" name="Nature">
        <title>The genome sequence of the filamentous fungus Neurospora crassa.</title>
        <authorList>
            <person name="Galagan J.E."/>
            <person name="Calvo S.E."/>
            <person name="Borkovich K.A."/>
            <person name="Selker E.U."/>
            <person name="Read N.D."/>
            <person name="Jaffe D.B."/>
            <person name="FitzHugh W."/>
            <person name="Ma L.-J."/>
            <person name="Smirnov S."/>
            <person name="Purcell S."/>
            <person name="Rehman B."/>
            <person name="Elkins T."/>
            <person name="Engels R."/>
            <person name="Wang S."/>
            <person name="Nielsen C.B."/>
            <person name="Butler J."/>
            <person name="Endrizzi M."/>
            <person name="Qui D."/>
            <person name="Ianakiev P."/>
            <person name="Bell-Pedersen D."/>
            <person name="Nelson M.A."/>
            <person name="Werner-Washburne M."/>
            <person name="Selitrennikoff C.P."/>
            <person name="Kinsey J.A."/>
            <person name="Braun E.L."/>
            <person name="Zelter A."/>
            <person name="Schulte U."/>
            <person name="Kothe G.O."/>
            <person name="Jedd G."/>
            <person name="Mewes H.-W."/>
            <person name="Staben C."/>
            <person name="Marcotte E."/>
            <person name="Greenberg D."/>
            <person name="Roy A."/>
            <person name="Foley K."/>
            <person name="Naylor J."/>
            <person name="Stange-Thomann N."/>
            <person name="Barrett R."/>
            <person name="Gnerre S."/>
            <person name="Kamal M."/>
            <person name="Kamvysselis M."/>
            <person name="Mauceli E.W."/>
            <person name="Bielke C."/>
            <person name="Rudd S."/>
            <person name="Frishman D."/>
            <person name="Krystofova S."/>
            <person name="Rasmussen C."/>
            <person name="Metzenberg R.L."/>
            <person name="Perkins D.D."/>
            <person name="Kroken S."/>
            <person name="Cogoni C."/>
            <person name="Macino G."/>
            <person name="Catcheside D.E.A."/>
            <person name="Li W."/>
            <person name="Pratt R.J."/>
            <person name="Osmani S.A."/>
            <person name="DeSouza C.P.C."/>
            <person name="Glass N.L."/>
            <person name="Orbach M.J."/>
            <person name="Berglund J.A."/>
            <person name="Voelker R."/>
            <person name="Yarden O."/>
            <person name="Plamann M."/>
            <person name="Seiler S."/>
            <person name="Dunlap J.C."/>
            <person name="Radford A."/>
            <person name="Aramayo R."/>
            <person name="Natvig D.O."/>
            <person name="Alex L.A."/>
            <person name="Mannhaupt G."/>
            <person name="Ebbole D.J."/>
            <person name="Freitag M."/>
            <person name="Paulsen I."/>
            <person name="Sachs M.S."/>
            <person name="Lander E.S."/>
            <person name="Nusbaum C."/>
            <person name="Birren B.W."/>
        </authorList>
    </citation>
    <scope>NUCLEOTIDE SEQUENCE [LARGE SCALE GENOMIC DNA]</scope>
    <source>
        <strain>ATCC 24698 / 74-OR23-1A / CBS 708.71 / DSM 1257 / FGSC 987</strain>
    </source>
</reference>
<organism>
    <name type="scientific">Neurospora crassa (strain ATCC 24698 / 74-OR23-1A / CBS 708.71 / DSM 1257 / FGSC 987)</name>
    <dbReference type="NCBI Taxonomy" id="367110"/>
    <lineage>
        <taxon>Eukaryota</taxon>
        <taxon>Fungi</taxon>
        <taxon>Dikarya</taxon>
        <taxon>Ascomycota</taxon>
        <taxon>Pezizomycotina</taxon>
        <taxon>Sordariomycetes</taxon>
        <taxon>Sordariomycetidae</taxon>
        <taxon>Sordariales</taxon>
        <taxon>Sordariaceae</taxon>
        <taxon>Neurospora</taxon>
    </lineage>
</organism>
<comment type="function">
    <text evidence="1">Component of the cytosolic Fe/S protein assembly machinery. Required for maturation of extramitochondrial Fe/S proteins. May play a role in the transfer of pre-assembled Fe/S clusters to target apoproteins (By similarity).</text>
</comment>
<comment type="similarity">
    <text evidence="3">Belongs to the NARF family.</text>
</comment>
<dbReference type="EMBL" id="CM002236">
    <property type="protein sequence ID" value="EAA36068.1"/>
    <property type="molecule type" value="Genomic_DNA"/>
</dbReference>
<dbReference type="RefSeq" id="XP_965304.1">
    <property type="nucleotide sequence ID" value="XM_960211.2"/>
</dbReference>
<dbReference type="SMR" id="Q7SGW5"/>
<dbReference type="FunCoup" id="Q7SGW5">
    <property type="interactions" value="359"/>
</dbReference>
<dbReference type="STRING" id="367110.Q7SGW5"/>
<dbReference type="PaxDb" id="5141-EFNCRP00000002996"/>
<dbReference type="EnsemblFungi" id="EAA36068">
    <property type="protein sequence ID" value="EAA36068"/>
    <property type="gene ID" value="NCU03204"/>
</dbReference>
<dbReference type="GeneID" id="3881453"/>
<dbReference type="KEGG" id="ncr:NCU03204"/>
<dbReference type="VEuPathDB" id="FungiDB:NCU03204"/>
<dbReference type="HOGENOM" id="CLU_018240_0_1_1"/>
<dbReference type="InParanoid" id="Q7SGW5"/>
<dbReference type="OMA" id="GYLHHVL"/>
<dbReference type="OrthoDB" id="10253113at2759"/>
<dbReference type="Proteomes" id="UP000001805">
    <property type="component" value="Chromosome 1, Linkage Group I"/>
</dbReference>
<dbReference type="GO" id="GO:0097361">
    <property type="term" value="C:cytosolic [4Fe-4S] assembly targeting complex"/>
    <property type="evidence" value="ECO:0000318"/>
    <property type="project" value="GO_Central"/>
</dbReference>
<dbReference type="GO" id="GO:0051539">
    <property type="term" value="F:4 iron, 4 sulfur cluster binding"/>
    <property type="evidence" value="ECO:0007669"/>
    <property type="project" value="UniProtKB-KW"/>
</dbReference>
<dbReference type="GO" id="GO:0051536">
    <property type="term" value="F:iron-sulfur cluster binding"/>
    <property type="evidence" value="ECO:0000250"/>
    <property type="project" value="UniProtKB"/>
</dbReference>
<dbReference type="GO" id="GO:0046872">
    <property type="term" value="F:metal ion binding"/>
    <property type="evidence" value="ECO:0007669"/>
    <property type="project" value="UniProtKB-KW"/>
</dbReference>
<dbReference type="GO" id="GO:0016226">
    <property type="term" value="P:iron-sulfur cluster assembly"/>
    <property type="evidence" value="ECO:0000250"/>
    <property type="project" value="UniProtKB"/>
</dbReference>
<dbReference type="FunFam" id="3.40.50.1780:FF:000004">
    <property type="entry name" value="Cytosolic Fe-S cluster assembly factor nar1"/>
    <property type="match status" value="1"/>
</dbReference>
<dbReference type="Gene3D" id="3.40.50.1780">
    <property type="match status" value="1"/>
</dbReference>
<dbReference type="Gene3D" id="3.40.950.10">
    <property type="entry name" value="Fe-only Hydrogenase (Larger Subunit), Chain L, domain 3"/>
    <property type="match status" value="1"/>
</dbReference>
<dbReference type="InterPro" id="IPR050340">
    <property type="entry name" value="Cytosolic_Fe-S_CAF"/>
</dbReference>
<dbReference type="InterPro" id="IPR009016">
    <property type="entry name" value="Fe_hydrogenase"/>
</dbReference>
<dbReference type="InterPro" id="IPR004108">
    <property type="entry name" value="Fe_hydrogenase_lsu_C"/>
</dbReference>
<dbReference type="PANTHER" id="PTHR11615">
    <property type="entry name" value="NITRATE, FORMATE, IRON DEHYDROGENASE"/>
    <property type="match status" value="1"/>
</dbReference>
<dbReference type="Pfam" id="PF02906">
    <property type="entry name" value="Fe_hyd_lg_C"/>
    <property type="match status" value="1"/>
</dbReference>
<dbReference type="SUPFAM" id="SSF53920">
    <property type="entry name" value="Fe-only hydrogenase"/>
    <property type="match status" value="1"/>
</dbReference>